<sequence length="521" mass="59314">MGALRWLFWVGLSYLSCCRLPRAEAQFPRVCMTVEAIRSKRCCPALGPDPGNVCGVLQGRGWCQGVQVDTQPWSGPYTLRNVDDRERWPLKFFNQSCWCTGNFAGYNCGDCKFGWTGPDCSVRKPPVVRKNIHSLTVEEREQFLDVLDRAKTTIHPDYVIATQHWMSLLGPSGEEPQIANCSIYNYFVWLHYYSVRDTLLGPGRPFTAIDFSHQGPAFVTWHRYHLLLLERDLQRLMGNESFALPYWDFATGRNTCDVCTDQLFGAPRPDDPGLISLNSRFSRWQIVCNSLDDYNRLVTLCNGSDEGLLQRRPRDSGEQLPTAEDVRRCLSRHEFDSPPFFRNSSFSFRNALEGFNKPEGALNSPMLNLHNLAHSFLNGTRVLPHAAANDPIFVVLHSFTDAIFDEWMKRFHPPDNAWPEELAPIGHNRLYNMVPFFPPVTNDQLFQTAEQLGYTYAIDLPGSLEESQAWAAMVGSTIGGALIALAVLVLLLVLFQHRKQRKGFEPLMNVRFSSKKYMEEA</sequence>
<evidence type="ECO:0000250" key="1"/>
<evidence type="ECO:0000250" key="2">
    <source>
        <dbReference type="UniProtKB" id="P29812"/>
    </source>
</evidence>
<evidence type="ECO:0000250" key="3">
    <source>
        <dbReference type="UniProtKB" id="P40126"/>
    </source>
</evidence>
<evidence type="ECO:0000255" key="4"/>
<evidence type="ECO:0000269" key="5">
    <source>
    </source>
</evidence>
<evidence type="ECO:0000305" key="6"/>
<accession>O93505</accession>
<gene>
    <name type="primary">DCT</name>
    <name type="synonym">TYRP2</name>
</gene>
<name>TYRP2_CHICK</name>
<proteinExistence type="evidence at transcript level"/>
<organism>
    <name type="scientific">Gallus gallus</name>
    <name type="common">Chicken</name>
    <dbReference type="NCBI Taxonomy" id="9031"/>
    <lineage>
        <taxon>Eukaryota</taxon>
        <taxon>Metazoa</taxon>
        <taxon>Chordata</taxon>
        <taxon>Craniata</taxon>
        <taxon>Vertebrata</taxon>
        <taxon>Euteleostomi</taxon>
        <taxon>Archelosauria</taxon>
        <taxon>Archosauria</taxon>
        <taxon>Dinosauria</taxon>
        <taxon>Saurischia</taxon>
        <taxon>Theropoda</taxon>
        <taxon>Coelurosauria</taxon>
        <taxon>Aves</taxon>
        <taxon>Neognathae</taxon>
        <taxon>Galloanserae</taxon>
        <taxon>Galliformes</taxon>
        <taxon>Phasianidae</taxon>
        <taxon>Phasianinae</taxon>
        <taxon>Gallus</taxon>
    </lineage>
</organism>
<keyword id="KW-0325">Glycoprotein</keyword>
<keyword id="KW-0413">Isomerase</keyword>
<keyword id="KW-0470">Melanin biosynthesis</keyword>
<keyword id="KW-0472">Membrane</keyword>
<keyword id="KW-0479">Metal-binding</keyword>
<keyword id="KW-1185">Reference proteome</keyword>
<keyword id="KW-0732">Signal</keyword>
<keyword id="KW-0812">Transmembrane</keyword>
<keyword id="KW-1133">Transmembrane helix</keyword>
<keyword id="KW-0862">Zinc</keyword>
<reference key="1">
    <citation type="journal article" date="1998" name="Gene">
        <title>Molecular cloning and sequence analysis of a chicken cDNA encoding tyrosinase-related protein-2/DOPAchrome tautomerase.</title>
        <authorList>
            <person name="April C.S."/>
            <person name="Jackson I.J."/>
            <person name="Kidson S.H."/>
        </authorList>
    </citation>
    <scope>NUCLEOTIDE SEQUENCE [MRNA]</scope>
    <scope>TISSUE SPECIFICITY</scope>
    <source>
        <strain>Black Australorp X New Hampshire red</strain>
        <tissue>Neural crest</tissue>
    </source>
</reference>
<feature type="signal peptide" evidence="4">
    <location>
        <begin position="1"/>
        <end position="25"/>
    </location>
</feature>
<feature type="chain" id="PRO_0000035894" description="L-dopachrome tautomerase">
    <location>
        <begin position="26"/>
        <end position="521"/>
    </location>
</feature>
<feature type="topological domain" description="Lumenal, melanosome" evidence="4">
    <location>
        <begin position="26"/>
        <end position="474"/>
    </location>
</feature>
<feature type="transmembrane region" description="Helical" evidence="4">
    <location>
        <begin position="475"/>
        <end position="495"/>
    </location>
</feature>
<feature type="topological domain" description="Cytoplasmic" evidence="4">
    <location>
        <begin position="496"/>
        <end position="521"/>
    </location>
</feature>
<feature type="binding site" evidence="1">
    <location>
        <position position="191"/>
    </location>
    <ligand>
        <name>Zn(2+)</name>
        <dbReference type="ChEBI" id="CHEBI:29105"/>
        <label>A</label>
    </ligand>
</feature>
<feature type="binding site" evidence="1">
    <location>
        <position position="213"/>
    </location>
    <ligand>
        <name>Zn(2+)</name>
        <dbReference type="ChEBI" id="CHEBI:29105"/>
        <label>A</label>
    </ligand>
</feature>
<feature type="binding site" evidence="1">
    <location>
        <position position="222"/>
    </location>
    <ligand>
        <name>Zn(2+)</name>
        <dbReference type="ChEBI" id="CHEBI:29105"/>
        <label>A</label>
    </ligand>
</feature>
<feature type="binding site" evidence="1">
    <location>
        <position position="370"/>
    </location>
    <ligand>
        <name>Zn(2+)</name>
        <dbReference type="ChEBI" id="CHEBI:29105"/>
        <label>B</label>
    </ligand>
</feature>
<feature type="binding site" evidence="1">
    <location>
        <position position="374"/>
    </location>
    <ligand>
        <name>Zn(2+)</name>
        <dbReference type="ChEBI" id="CHEBI:29105"/>
        <label>B</label>
    </ligand>
</feature>
<feature type="binding site" evidence="1">
    <location>
        <position position="397"/>
    </location>
    <ligand>
        <name>Zn(2+)</name>
        <dbReference type="ChEBI" id="CHEBI:29105"/>
        <label>B</label>
    </ligand>
</feature>
<feature type="glycosylation site" description="N-linked (GlcNAc...) asparagine" evidence="4">
    <location>
        <position position="94"/>
    </location>
</feature>
<feature type="glycosylation site" description="N-linked (GlcNAc...) asparagine" evidence="4">
    <location>
        <position position="180"/>
    </location>
</feature>
<feature type="glycosylation site" description="N-linked (GlcNAc...) asparagine" evidence="4">
    <location>
        <position position="239"/>
    </location>
</feature>
<feature type="glycosylation site" description="N-linked (GlcNAc...) asparagine" evidence="4">
    <location>
        <position position="302"/>
    </location>
</feature>
<feature type="glycosylation site" description="N-linked (GlcNAc...) asparagine" evidence="4">
    <location>
        <position position="343"/>
    </location>
</feature>
<feature type="glycosylation site" description="N-linked (GlcNAc...) asparagine" evidence="4">
    <location>
        <position position="378"/>
    </location>
</feature>
<protein>
    <recommendedName>
        <fullName>L-dopachrome tautomerase</fullName>
        <shortName>DCT</shortName>
        <shortName>DT</shortName>
        <ecNumber>5.3.3.12</ecNumber>
    </recommendedName>
    <alternativeName>
        <fullName>L-dopachrome Delta-isomerase</fullName>
    </alternativeName>
    <alternativeName>
        <fullName>Tyrosinase-related protein 2</fullName>
        <shortName>TRP-2</shortName>
        <shortName>TRP2</shortName>
    </alternativeName>
</protein>
<comment type="function">
    <text evidence="3">Plays a role in melanin biosynthesis. Catalyzes the conversion of L-dopachrome into 5,6-dihydroxyindole-2-carboxylic acid (DHICA).</text>
</comment>
<comment type="catalytic activity">
    <reaction>
        <text>L-dopachrome = 5,6-dihydroxyindole-2-carboxylate</text>
        <dbReference type="Rhea" id="RHEA:13041"/>
        <dbReference type="ChEBI" id="CHEBI:16875"/>
        <dbReference type="ChEBI" id="CHEBI:57509"/>
        <dbReference type="EC" id="5.3.3.12"/>
    </reaction>
</comment>
<comment type="cofactor">
    <cofactor evidence="2">
        <name>Zn(2+)</name>
        <dbReference type="ChEBI" id="CHEBI:29105"/>
    </cofactor>
    <text evidence="2">Binds 2 Zn(2+) ions per subunit.</text>
</comment>
<comment type="pathway">
    <text>Pigment biosynthesis; melanin biosynthesis.</text>
</comment>
<comment type="subcellular location">
    <subcellularLocation>
        <location evidence="3">Melanosome membrane</location>
        <topology evidence="3">Single-pass type I membrane protein</topology>
    </subcellularLocation>
    <subcellularLocation>
        <location evidence="2">Melanosome</location>
    </subcellularLocation>
    <text evidence="2">Proper trafficking to melanosome is regulated by SGSM2, ANKRD27, RAB9A, RAB32 and RAB38.</text>
</comment>
<comment type="tissue specificity">
    <text evidence="5">Melanocytes and retinal pigmented epithelium.</text>
</comment>
<comment type="similarity">
    <text evidence="6">Belongs to the tyrosinase family.</text>
</comment>
<dbReference type="EC" id="5.3.3.12"/>
<dbReference type="EMBL" id="AF023471">
    <property type="protein sequence ID" value="AAC63434.1"/>
    <property type="molecule type" value="mRNA"/>
</dbReference>
<dbReference type="RefSeq" id="NP_990266.1">
    <property type="nucleotide sequence ID" value="NM_204935.1"/>
</dbReference>
<dbReference type="SMR" id="O93505"/>
<dbReference type="FunCoup" id="O93505">
    <property type="interactions" value="17"/>
</dbReference>
<dbReference type="STRING" id="9031.ENSGALP00000035733"/>
<dbReference type="GlyCosmos" id="O93505">
    <property type="glycosylation" value="6 sites, No reported glycans"/>
</dbReference>
<dbReference type="GlyGen" id="O93505">
    <property type="glycosylation" value="6 sites"/>
</dbReference>
<dbReference type="PaxDb" id="9031-ENSGALP00000035733"/>
<dbReference type="GeneID" id="395775"/>
<dbReference type="KEGG" id="gga:395775"/>
<dbReference type="CTD" id="1638"/>
<dbReference type="VEuPathDB" id="HostDB:geneid_395775"/>
<dbReference type="eggNOG" id="ENOG502QRNA">
    <property type="taxonomic scope" value="Eukaryota"/>
</dbReference>
<dbReference type="InParanoid" id="O93505"/>
<dbReference type="OrthoDB" id="6132182at2759"/>
<dbReference type="PhylomeDB" id="O93505"/>
<dbReference type="UniPathway" id="UPA00785"/>
<dbReference type="PRO" id="PR:O93505"/>
<dbReference type="Proteomes" id="UP000000539">
    <property type="component" value="Unassembled WGS sequence"/>
</dbReference>
<dbReference type="GO" id="GO:0042470">
    <property type="term" value="C:melanosome"/>
    <property type="evidence" value="ECO:0000250"/>
    <property type="project" value="UniProtKB"/>
</dbReference>
<dbReference type="GO" id="GO:0033162">
    <property type="term" value="C:melanosome membrane"/>
    <property type="evidence" value="ECO:0007669"/>
    <property type="project" value="UniProtKB-SubCell"/>
</dbReference>
<dbReference type="GO" id="GO:0004167">
    <property type="term" value="F:dopachrome isomerase activity"/>
    <property type="evidence" value="ECO:0000318"/>
    <property type="project" value="GO_Central"/>
</dbReference>
<dbReference type="GO" id="GO:0046872">
    <property type="term" value="F:metal ion binding"/>
    <property type="evidence" value="ECO:0007669"/>
    <property type="project" value="UniProtKB-KW"/>
</dbReference>
<dbReference type="GO" id="GO:0016491">
    <property type="term" value="F:oxidoreductase activity"/>
    <property type="evidence" value="ECO:0007669"/>
    <property type="project" value="InterPro"/>
</dbReference>
<dbReference type="GO" id="GO:0048066">
    <property type="term" value="P:developmental pigmentation"/>
    <property type="evidence" value="ECO:0000318"/>
    <property type="project" value="GO_Central"/>
</dbReference>
<dbReference type="GO" id="GO:0006583">
    <property type="term" value="P:melanin biosynthetic process from tyrosine"/>
    <property type="evidence" value="ECO:0000250"/>
    <property type="project" value="UniProtKB"/>
</dbReference>
<dbReference type="GO" id="GO:0002052">
    <property type="term" value="P:positive regulation of neuroblast proliferation"/>
    <property type="evidence" value="ECO:0000318"/>
    <property type="project" value="GO_Central"/>
</dbReference>
<dbReference type="GO" id="GO:0021847">
    <property type="term" value="P:ventricular zone neuroblast division"/>
    <property type="evidence" value="ECO:0000318"/>
    <property type="project" value="GO_Central"/>
</dbReference>
<dbReference type="FunFam" id="1.10.1280.10:FF:000002">
    <property type="entry name" value="L-dopachrome tautomerase"/>
    <property type="match status" value="1"/>
</dbReference>
<dbReference type="Gene3D" id="1.10.1280.10">
    <property type="entry name" value="Di-copper center containing domain from catechol oxidase"/>
    <property type="match status" value="1"/>
</dbReference>
<dbReference type="InterPro" id="IPR008922">
    <property type="entry name" value="Di-copper_centre_dom_sf"/>
</dbReference>
<dbReference type="InterPro" id="IPR050316">
    <property type="entry name" value="Tyrosinase/Hemocyanin"/>
</dbReference>
<dbReference type="InterPro" id="IPR002227">
    <property type="entry name" value="Tyrosinase_Cu-bd"/>
</dbReference>
<dbReference type="PANTHER" id="PTHR11474:SF4">
    <property type="entry name" value="L-DOPACHROME TAUTOMERASE"/>
    <property type="match status" value="1"/>
</dbReference>
<dbReference type="PANTHER" id="PTHR11474">
    <property type="entry name" value="TYROSINASE FAMILY MEMBER"/>
    <property type="match status" value="1"/>
</dbReference>
<dbReference type="Pfam" id="PF00264">
    <property type="entry name" value="Tyrosinase"/>
    <property type="match status" value="1"/>
</dbReference>
<dbReference type="PRINTS" id="PR00092">
    <property type="entry name" value="TYROSINASE"/>
</dbReference>
<dbReference type="SUPFAM" id="SSF48056">
    <property type="entry name" value="Di-copper centre-containing domain"/>
    <property type="match status" value="1"/>
</dbReference>
<dbReference type="PROSITE" id="PS00497">
    <property type="entry name" value="TYROSINASE_1"/>
    <property type="match status" value="1"/>
</dbReference>
<dbReference type="PROSITE" id="PS00498">
    <property type="entry name" value="TYROSINASE_2"/>
    <property type="match status" value="1"/>
</dbReference>